<keyword id="KW-0028">Amino-acid biosynthesis</keyword>
<keyword id="KW-0963">Cytoplasm</keyword>
<keyword id="KW-0368">Histidine biosynthesis</keyword>
<keyword id="KW-0378">Hydrolase</keyword>
<keyword id="KW-0460">Magnesium</keyword>
<keyword id="KW-0479">Metal-binding</keyword>
<keyword id="KW-0862">Zinc</keyword>
<organism>
    <name type="scientific">Mycobacterium sp. (strain MCS)</name>
    <dbReference type="NCBI Taxonomy" id="164756"/>
    <lineage>
        <taxon>Bacteria</taxon>
        <taxon>Bacillati</taxon>
        <taxon>Actinomycetota</taxon>
        <taxon>Actinomycetes</taxon>
        <taxon>Mycobacteriales</taxon>
        <taxon>Mycobacteriaceae</taxon>
        <taxon>Mycobacterium</taxon>
    </lineage>
</organism>
<feature type="chain" id="PRO_1000063417" description="Phosphoribosyl-AMP cyclohydrolase">
    <location>
        <begin position="1"/>
        <end position="115"/>
    </location>
</feature>
<feature type="binding site" evidence="1">
    <location>
        <position position="80"/>
    </location>
    <ligand>
        <name>Mg(2+)</name>
        <dbReference type="ChEBI" id="CHEBI:18420"/>
    </ligand>
</feature>
<feature type="binding site" evidence="1">
    <location>
        <position position="81"/>
    </location>
    <ligand>
        <name>Zn(2+)</name>
        <dbReference type="ChEBI" id="CHEBI:29105"/>
        <note>ligand shared between dimeric partners</note>
    </ligand>
</feature>
<feature type="binding site" evidence="1">
    <location>
        <position position="82"/>
    </location>
    <ligand>
        <name>Mg(2+)</name>
        <dbReference type="ChEBI" id="CHEBI:18420"/>
    </ligand>
</feature>
<feature type="binding site" evidence="1">
    <location>
        <position position="84"/>
    </location>
    <ligand>
        <name>Mg(2+)</name>
        <dbReference type="ChEBI" id="CHEBI:18420"/>
    </ligand>
</feature>
<feature type="binding site" evidence="1">
    <location>
        <position position="97"/>
    </location>
    <ligand>
        <name>Zn(2+)</name>
        <dbReference type="ChEBI" id="CHEBI:29105"/>
        <note>ligand shared between dimeric partners</note>
    </ligand>
</feature>
<feature type="binding site" evidence="1">
    <location>
        <position position="104"/>
    </location>
    <ligand>
        <name>Zn(2+)</name>
        <dbReference type="ChEBI" id="CHEBI:29105"/>
        <note>ligand shared between dimeric partners</note>
    </ligand>
</feature>
<sequence length="115" mass="12691">MALDPEIASRLKRNADGLFTAVAQERGTGQVLMVAWMDDIALDRTMRTRNATYWSRSRGEHWVKGETSGHTQHVHSVRLDCDGDTVLLEVEQSGPACHTGTHTCFDADVLLAPEA</sequence>
<dbReference type="EC" id="3.5.4.19" evidence="1"/>
<dbReference type="EMBL" id="CP000384">
    <property type="protein sequence ID" value="ABG09163.1"/>
    <property type="molecule type" value="Genomic_DNA"/>
</dbReference>
<dbReference type="SMR" id="Q1B7H1"/>
<dbReference type="KEGG" id="mmc:Mmcs_3056"/>
<dbReference type="HOGENOM" id="CLU_048577_5_1_11"/>
<dbReference type="BioCyc" id="MSP164756:G1G6O-3119-MONOMER"/>
<dbReference type="UniPathway" id="UPA00031">
    <property type="reaction ID" value="UER00008"/>
</dbReference>
<dbReference type="GO" id="GO:0005737">
    <property type="term" value="C:cytoplasm"/>
    <property type="evidence" value="ECO:0007669"/>
    <property type="project" value="UniProtKB-SubCell"/>
</dbReference>
<dbReference type="GO" id="GO:0000287">
    <property type="term" value="F:magnesium ion binding"/>
    <property type="evidence" value="ECO:0007669"/>
    <property type="project" value="UniProtKB-UniRule"/>
</dbReference>
<dbReference type="GO" id="GO:0004635">
    <property type="term" value="F:phosphoribosyl-AMP cyclohydrolase activity"/>
    <property type="evidence" value="ECO:0007669"/>
    <property type="project" value="UniProtKB-UniRule"/>
</dbReference>
<dbReference type="GO" id="GO:0008270">
    <property type="term" value="F:zinc ion binding"/>
    <property type="evidence" value="ECO:0007669"/>
    <property type="project" value="UniProtKB-UniRule"/>
</dbReference>
<dbReference type="GO" id="GO:0000105">
    <property type="term" value="P:L-histidine biosynthetic process"/>
    <property type="evidence" value="ECO:0007669"/>
    <property type="project" value="UniProtKB-UniRule"/>
</dbReference>
<dbReference type="FunFam" id="3.10.20.810:FF:000001">
    <property type="entry name" value="Histidine biosynthesis bifunctional protein HisIE"/>
    <property type="match status" value="1"/>
</dbReference>
<dbReference type="Gene3D" id="3.10.20.810">
    <property type="entry name" value="Phosphoribosyl-AMP cyclohydrolase"/>
    <property type="match status" value="1"/>
</dbReference>
<dbReference type="HAMAP" id="MF_01021">
    <property type="entry name" value="HisI"/>
    <property type="match status" value="1"/>
</dbReference>
<dbReference type="InterPro" id="IPR026660">
    <property type="entry name" value="PRA-CH"/>
</dbReference>
<dbReference type="InterPro" id="IPR002496">
    <property type="entry name" value="PRib_AMP_CycHydrolase_dom"/>
</dbReference>
<dbReference type="InterPro" id="IPR038019">
    <property type="entry name" value="PRib_AMP_CycHydrolase_sf"/>
</dbReference>
<dbReference type="NCBIfam" id="NF000768">
    <property type="entry name" value="PRK00051.1"/>
    <property type="match status" value="1"/>
</dbReference>
<dbReference type="PANTHER" id="PTHR42945">
    <property type="entry name" value="HISTIDINE BIOSYNTHESIS BIFUNCTIONAL PROTEIN"/>
    <property type="match status" value="1"/>
</dbReference>
<dbReference type="PANTHER" id="PTHR42945:SF11">
    <property type="entry name" value="PHOSPHORIBOSYL-AMP CYCLOHYDROLASE"/>
    <property type="match status" value="1"/>
</dbReference>
<dbReference type="Pfam" id="PF01502">
    <property type="entry name" value="PRA-CH"/>
    <property type="match status" value="1"/>
</dbReference>
<dbReference type="SUPFAM" id="SSF141734">
    <property type="entry name" value="HisI-like"/>
    <property type="match status" value="1"/>
</dbReference>
<accession>Q1B7H1</accession>
<protein>
    <recommendedName>
        <fullName evidence="1">Phosphoribosyl-AMP cyclohydrolase</fullName>
        <shortName evidence="1">PRA-CH</shortName>
        <ecNumber evidence="1">3.5.4.19</ecNumber>
    </recommendedName>
</protein>
<gene>
    <name evidence="1" type="primary">hisI</name>
    <name type="ordered locus">Mmcs_3056</name>
</gene>
<evidence type="ECO:0000255" key="1">
    <source>
        <dbReference type="HAMAP-Rule" id="MF_01021"/>
    </source>
</evidence>
<name>HIS3_MYCSS</name>
<comment type="function">
    <text evidence="1">Catalyzes the hydrolysis of the adenine ring of phosphoribosyl-AMP.</text>
</comment>
<comment type="catalytic activity">
    <reaction evidence="1">
        <text>1-(5-phospho-beta-D-ribosyl)-5'-AMP + H2O = 1-(5-phospho-beta-D-ribosyl)-5-[(5-phospho-beta-D-ribosylamino)methylideneamino]imidazole-4-carboxamide</text>
        <dbReference type="Rhea" id="RHEA:20049"/>
        <dbReference type="ChEBI" id="CHEBI:15377"/>
        <dbReference type="ChEBI" id="CHEBI:58435"/>
        <dbReference type="ChEBI" id="CHEBI:59457"/>
        <dbReference type="EC" id="3.5.4.19"/>
    </reaction>
</comment>
<comment type="cofactor">
    <cofactor evidence="1">
        <name>Mg(2+)</name>
        <dbReference type="ChEBI" id="CHEBI:18420"/>
    </cofactor>
    <text evidence="1">Binds 1 Mg(2+) ion per subunit.</text>
</comment>
<comment type="cofactor">
    <cofactor evidence="1">
        <name>Zn(2+)</name>
        <dbReference type="ChEBI" id="CHEBI:29105"/>
    </cofactor>
    <text evidence="1">Binds 1 zinc ion per subunit.</text>
</comment>
<comment type="pathway">
    <text evidence="1">Amino-acid biosynthesis; L-histidine biosynthesis; L-histidine from 5-phospho-alpha-D-ribose 1-diphosphate: step 3/9.</text>
</comment>
<comment type="subunit">
    <text evidence="1">Homodimer.</text>
</comment>
<comment type="subcellular location">
    <subcellularLocation>
        <location evidence="1">Cytoplasm</location>
    </subcellularLocation>
</comment>
<comment type="similarity">
    <text evidence="1">Belongs to the PRA-CH family.</text>
</comment>
<proteinExistence type="inferred from homology"/>
<reference key="1">
    <citation type="submission" date="2006-06" db="EMBL/GenBank/DDBJ databases">
        <title>Complete sequence of chromosome of Mycobacterium sp. MCS.</title>
        <authorList>
            <consortium name="US DOE Joint Genome Institute"/>
            <person name="Copeland A."/>
            <person name="Lucas S."/>
            <person name="Lapidus A."/>
            <person name="Barry K."/>
            <person name="Detter J.C."/>
            <person name="Glavina del Rio T."/>
            <person name="Hammon N."/>
            <person name="Israni S."/>
            <person name="Dalin E."/>
            <person name="Tice H."/>
            <person name="Pitluck S."/>
            <person name="Martinez M."/>
            <person name="Schmutz J."/>
            <person name="Larimer F."/>
            <person name="Land M."/>
            <person name="Hauser L."/>
            <person name="Kyrpides N."/>
            <person name="Kim E."/>
            <person name="Miller C.D."/>
            <person name="Hughes J.E."/>
            <person name="Anderson A.J."/>
            <person name="Sims R.C."/>
            <person name="Richardson P."/>
        </authorList>
    </citation>
    <scope>NUCLEOTIDE SEQUENCE [LARGE SCALE GENOMIC DNA]</scope>
    <source>
        <strain>MCS</strain>
    </source>
</reference>